<comment type="function">
    <text evidence="1">Forms part of the ribosomal stalk which helps the ribosome interact with GTP-bound translation factors. Is thus essential for accurate translation.</text>
</comment>
<comment type="subunit">
    <text evidence="1">Homodimer. Part of the ribosomal stalk of the 50S ribosomal subunit. Forms a multimeric L10(L12)X complex, where L10 forms an elongated spine to which 2 to 4 L12 dimers bind in a sequential fashion. Binds GTP-bound translation factors.</text>
</comment>
<comment type="similarity">
    <text evidence="1">Belongs to the bacterial ribosomal protein bL12 family.</text>
</comment>
<name>RL7_PARMW</name>
<sequence>MSAKTDEILESLKSLSLLEASELVKQIEEAFGVSAAASAGVVMAAPGAAAGGGGGEVAEEKTEFDVILESFDAAAKIKVLKAVRNATGLGLGDAKALVEAAPKPIKEGISKDEAEALKKEIEEVGGKVTLK</sequence>
<protein>
    <recommendedName>
        <fullName evidence="1">Large ribosomal subunit protein bL12</fullName>
    </recommendedName>
    <alternativeName>
        <fullName evidence="2">50S ribosomal protein L7/L12</fullName>
    </alternativeName>
</protein>
<proteinExistence type="inferred from homology"/>
<gene>
    <name evidence="1" type="primary">rplL</name>
    <name evidence="1" type="synonym">rpl12</name>
    <name type="ordered locus">SYNW2340</name>
</gene>
<accession>Q7U3T9</accession>
<organism>
    <name type="scientific">Parasynechococcus marenigrum (strain WH8102)</name>
    <dbReference type="NCBI Taxonomy" id="84588"/>
    <lineage>
        <taxon>Bacteria</taxon>
        <taxon>Bacillati</taxon>
        <taxon>Cyanobacteriota</taxon>
        <taxon>Cyanophyceae</taxon>
        <taxon>Synechococcales</taxon>
        <taxon>Prochlorococcaceae</taxon>
        <taxon>Parasynechococcus</taxon>
        <taxon>Parasynechococcus marenigrum</taxon>
    </lineage>
</organism>
<evidence type="ECO:0000255" key="1">
    <source>
        <dbReference type="HAMAP-Rule" id="MF_00368"/>
    </source>
</evidence>
<evidence type="ECO:0000305" key="2"/>
<keyword id="KW-0687">Ribonucleoprotein</keyword>
<keyword id="KW-0689">Ribosomal protein</keyword>
<feature type="chain" id="PRO_0000243515" description="Large ribosomal subunit protein bL12">
    <location>
        <begin position="1"/>
        <end position="131"/>
    </location>
</feature>
<reference key="1">
    <citation type="journal article" date="2003" name="Nature">
        <title>The genome of a motile marine Synechococcus.</title>
        <authorList>
            <person name="Palenik B."/>
            <person name="Brahamsha B."/>
            <person name="Larimer F.W."/>
            <person name="Land M.L."/>
            <person name="Hauser L."/>
            <person name="Chain P."/>
            <person name="Lamerdin J.E."/>
            <person name="Regala W."/>
            <person name="Allen E.E."/>
            <person name="McCarren J."/>
            <person name="Paulsen I.T."/>
            <person name="Dufresne A."/>
            <person name="Partensky F."/>
            <person name="Webb E.A."/>
            <person name="Waterbury J."/>
        </authorList>
    </citation>
    <scope>NUCLEOTIDE SEQUENCE [LARGE SCALE GENOMIC DNA]</scope>
    <source>
        <strain>WH8102</strain>
    </source>
</reference>
<dbReference type="EMBL" id="BX569695">
    <property type="protein sequence ID" value="CAE08855.1"/>
    <property type="molecule type" value="Genomic_DNA"/>
</dbReference>
<dbReference type="RefSeq" id="WP_011129193.1">
    <property type="nucleotide sequence ID" value="NC_005070.1"/>
</dbReference>
<dbReference type="SMR" id="Q7U3T9"/>
<dbReference type="STRING" id="84588.SYNW2340"/>
<dbReference type="KEGG" id="syw:SYNW2340"/>
<dbReference type="eggNOG" id="COG0222">
    <property type="taxonomic scope" value="Bacteria"/>
</dbReference>
<dbReference type="HOGENOM" id="CLU_086499_3_0_3"/>
<dbReference type="Proteomes" id="UP000001422">
    <property type="component" value="Chromosome"/>
</dbReference>
<dbReference type="GO" id="GO:0022625">
    <property type="term" value="C:cytosolic large ribosomal subunit"/>
    <property type="evidence" value="ECO:0007669"/>
    <property type="project" value="TreeGrafter"/>
</dbReference>
<dbReference type="GO" id="GO:0003729">
    <property type="term" value="F:mRNA binding"/>
    <property type="evidence" value="ECO:0007669"/>
    <property type="project" value="TreeGrafter"/>
</dbReference>
<dbReference type="GO" id="GO:0003735">
    <property type="term" value="F:structural constituent of ribosome"/>
    <property type="evidence" value="ECO:0007669"/>
    <property type="project" value="InterPro"/>
</dbReference>
<dbReference type="GO" id="GO:0006412">
    <property type="term" value="P:translation"/>
    <property type="evidence" value="ECO:0007669"/>
    <property type="project" value="UniProtKB-UniRule"/>
</dbReference>
<dbReference type="CDD" id="cd00387">
    <property type="entry name" value="Ribosomal_L7_L12"/>
    <property type="match status" value="1"/>
</dbReference>
<dbReference type="FunFam" id="3.30.1390.10:FF:000001">
    <property type="entry name" value="50S ribosomal protein L7/L12"/>
    <property type="match status" value="1"/>
</dbReference>
<dbReference type="Gene3D" id="3.30.1390.10">
    <property type="match status" value="1"/>
</dbReference>
<dbReference type="Gene3D" id="1.20.5.710">
    <property type="entry name" value="Single helix bin"/>
    <property type="match status" value="1"/>
</dbReference>
<dbReference type="HAMAP" id="MF_00368">
    <property type="entry name" value="Ribosomal_bL12"/>
    <property type="match status" value="1"/>
</dbReference>
<dbReference type="InterPro" id="IPR000206">
    <property type="entry name" value="Ribosomal_bL12"/>
</dbReference>
<dbReference type="InterPro" id="IPR013823">
    <property type="entry name" value="Ribosomal_bL12_C"/>
</dbReference>
<dbReference type="InterPro" id="IPR014719">
    <property type="entry name" value="Ribosomal_bL12_C/ClpS-like"/>
</dbReference>
<dbReference type="InterPro" id="IPR008932">
    <property type="entry name" value="Ribosomal_bL12_oligo"/>
</dbReference>
<dbReference type="InterPro" id="IPR036235">
    <property type="entry name" value="Ribosomal_bL12_oligo_N_sf"/>
</dbReference>
<dbReference type="NCBIfam" id="TIGR00855">
    <property type="entry name" value="L12"/>
    <property type="match status" value="1"/>
</dbReference>
<dbReference type="PANTHER" id="PTHR45987">
    <property type="entry name" value="39S RIBOSOMAL PROTEIN L12"/>
    <property type="match status" value="1"/>
</dbReference>
<dbReference type="PANTHER" id="PTHR45987:SF4">
    <property type="entry name" value="LARGE RIBOSOMAL SUBUNIT PROTEIN BL12M"/>
    <property type="match status" value="1"/>
</dbReference>
<dbReference type="Pfam" id="PF00542">
    <property type="entry name" value="Ribosomal_L12"/>
    <property type="match status" value="1"/>
</dbReference>
<dbReference type="Pfam" id="PF16320">
    <property type="entry name" value="Ribosomal_L12_N"/>
    <property type="match status" value="1"/>
</dbReference>
<dbReference type="SUPFAM" id="SSF54736">
    <property type="entry name" value="ClpS-like"/>
    <property type="match status" value="1"/>
</dbReference>
<dbReference type="SUPFAM" id="SSF48300">
    <property type="entry name" value="Ribosomal protein L7/12, oligomerisation (N-terminal) domain"/>
    <property type="match status" value="1"/>
</dbReference>